<feature type="chain" id="PRO_0000151055" description="UPF0284 protein PYRAB00380">
    <location>
        <begin position="1"/>
        <end position="336"/>
    </location>
</feature>
<accession>Q9V2N7</accession>
<accession>G8ZFL8</accession>
<proteinExistence type="inferred from homology"/>
<gene>
    <name type="ordered locus">PYRAB00380</name>
    <name type="ORF">PAB2326</name>
</gene>
<name>Y038_PYRAB</name>
<protein>
    <recommendedName>
        <fullName evidence="1">UPF0284 protein PYRAB00380</fullName>
    </recommendedName>
</protein>
<evidence type="ECO:0000255" key="1">
    <source>
        <dbReference type="HAMAP-Rule" id="MF_01086"/>
    </source>
</evidence>
<evidence type="ECO:0000305" key="2"/>
<reference key="1">
    <citation type="journal article" date="2003" name="Mol. Microbiol.">
        <title>An integrated analysis of the genome of the hyperthermophilic archaeon Pyrococcus abyssi.</title>
        <authorList>
            <person name="Cohen G.N."/>
            <person name="Barbe V."/>
            <person name="Flament D."/>
            <person name="Galperin M."/>
            <person name="Heilig R."/>
            <person name="Lecompte O."/>
            <person name="Poch O."/>
            <person name="Prieur D."/>
            <person name="Querellou J."/>
            <person name="Ripp R."/>
            <person name="Thierry J.-C."/>
            <person name="Van der Oost J."/>
            <person name="Weissenbach J."/>
            <person name="Zivanovic Y."/>
            <person name="Forterre P."/>
        </authorList>
    </citation>
    <scope>NUCLEOTIDE SEQUENCE [LARGE SCALE GENOMIC DNA]</scope>
    <source>
        <strain>GE5 / Orsay</strain>
    </source>
</reference>
<reference key="2">
    <citation type="journal article" date="2012" name="Curr. Microbiol.">
        <title>Re-annotation of two hyperthermophilic archaea Pyrococcus abyssi GE5 and Pyrococcus furiosus DSM 3638.</title>
        <authorList>
            <person name="Gao J."/>
            <person name="Wang J."/>
        </authorList>
    </citation>
    <scope>GENOME REANNOTATION</scope>
    <source>
        <strain>GE5 / Orsay</strain>
    </source>
</reference>
<comment type="similarity">
    <text evidence="1">Belongs to the UPF0284 family.</text>
</comment>
<comment type="sequence caution" evidence="2">
    <conflict type="erroneous initiation">
        <sequence resource="EMBL-CDS" id="CCE69409"/>
    </conflict>
    <text>Extended N-terminus.</text>
</comment>
<dbReference type="EMBL" id="AJ248283">
    <property type="protein sequence ID" value="CAB48961.1"/>
    <property type="molecule type" value="Genomic_DNA"/>
</dbReference>
<dbReference type="EMBL" id="HE613800">
    <property type="protein sequence ID" value="CCE69409.1"/>
    <property type="status" value="ALT_INIT"/>
    <property type="molecule type" value="Genomic_DNA"/>
</dbReference>
<dbReference type="PIR" id="B75189">
    <property type="entry name" value="B75189"/>
</dbReference>
<dbReference type="RefSeq" id="WP_010867162.1">
    <property type="nucleotide sequence ID" value="NC_000868.1"/>
</dbReference>
<dbReference type="SMR" id="Q9V2N7"/>
<dbReference type="STRING" id="272844.PAB2326"/>
<dbReference type="KEGG" id="pab:PAB2326"/>
<dbReference type="PATRIC" id="fig|272844.11.peg.44"/>
<dbReference type="eggNOG" id="arCOG04272">
    <property type="taxonomic scope" value="Archaea"/>
</dbReference>
<dbReference type="HOGENOM" id="CLU_053134_0_0_2"/>
<dbReference type="OrthoDB" id="9136at2157"/>
<dbReference type="PhylomeDB" id="Q9V2N7"/>
<dbReference type="Proteomes" id="UP000000810">
    <property type="component" value="Chromosome"/>
</dbReference>
<dbReference type="Proteomes" id="UP000009139">
    <property type="component" value="Chromosome"/>
</dbReference>
<dbReference type="GO" id="GO:0008939">
    <property type="term" value="F:nicotinate-nucleotide-dimethylbenzimidazole phosphoribosyltransferase activity"/>
    <property type="evidence" value="ECO:0007669"/>
    <property type="project" value="InterPro"/>
</dbReference>
<dbReference type="CDD" id="cd02439">
    <property type="entry name" value="DMB-PRT_CobT"/>
    <property type="match status" value="1"/>
</dbReference>
<dbReference type="Gene3D" id="3.40.50.10210">
    <property type="match status" value="1"/>
</dbReference>
<dbReference type="HAMAP" id="MF_01086">
    <property type="entry name" value="UPF0284"/>
    <property type="match status" value="1"/>
</dbReference>
<dbReference type="InterPro" id="IPR003200">
    <property type="entry name" value="Nict_dMeBzImd_PRibTrfase"/>
</dbReference>
<dbReference type="InterPro" id="IPR002805">
    <property type="entry name" value="Nict_dMeBzImd_PRibTrfase_arc"/>
</dbReference>
<dbReference type="InterPro" id="IPR036087">
    <property type="entry name" value="Nict_dMeBzImd_PRibTrfase_sf"/>
</dbReference>
<dbReference type="NCBIfam" id="TIGR00303">
    <property type="entry name" value="nicotinate mononucleotide-dependent phosphoribosyltransferase CobT"/>
    <property type="match status" value="1"/>
</dbReference>
<dbReference type="NCBIfam" id="NF003368">
    <property type="entry name" value="PRK04447.1-1"/>
    <property type="match status" value="1"/>
</dbReference>
<dbReference type="NCBIfam" id="NF003372">
    <property type="entry name" value="PRK04447.1-5"/>
    <property type="match status" value="1"/>
</dbReference>
<dbReference type="PANTHER" id="PTHR38811">
    <property type="match status" value="1"/>
</dbReference>
<dbReference type="PANTHER" id="PTHR38811:SF1">
    <property type="entry name" value="UPF0284 PROTEIN SLL1500"/>
    <property type="match status" value="1"/>
</dbReference>
<dbReference type="SUPFAM" id="SSF52733">
    <property type="entry name" value="Nicotinate mononucleotide:5,6-dimethylbenzimidazole phosphoribosyltransferase (CobT)"/>
    <property type="match status" value="1"/>
</dbReference>
<sequence>MESLFLLVLGNTEISTIPGISVAGATPELTKITPVADAEYLFHEKPLTIDAIPVTPEGHPTPAIITKAAKELADFPIIVIRGGTYLAPLVPHVHISDVVGRDFRKEIALPEFGEIIKRAKLFGEELNKLPIKELVIGESTPGGTTTAQAVLWALGYEARTSSASPNNPQELKERVIMEGFNRAGIEKGQLSEKPLEALRQFGDPMIATVVGLSLGFRKDIVLAGGTQMLAVSAILKALGEDMKRFMIATTRWVVNDRSATFVETAREIGIITYSADLDFSNSKFKGLRDYERGYVKEGVGAGGATWLAVKSGFSPEDVSEKVEELYERLMRMKSLT</sequence>
<organism>
    <name type="scientific">Pyrococcus abyssi (strain GE5 / Orsay)</name>
    <dbReference type="NCBI Taxonomy" id="272844"/>
    <lineage>
        <taxon>Archaea</taxon>
        <taxon>Methanobacteriati</taxon>
        <taxon>Methanobacteriota</taxon>
        <taxon>Thermococci</taxon>
        <taxon>Thermococcales</taxon>
        <taxon>Thermococcaceae</taxon>
        <taxon>Pyrococcus</taxon>
    </lineage>
</organism>